<sequence length="65" mass="7243">MGMRMMFTVFLLVVLATTVVSFMSGRAFRDRNAAAKVSDLIALKARRPECCSHPACNVDHPEICR</sequence>
<dbReference type="EMBL" id="MH282822">
    <property type="protein sequence ID" value="AYP73029.1"/>
    <property type="molecule type" value="mRNA"/>
</dbReference>
<dbReference type="SMR" id="A0A3G3C7S0"/>
<dbReference type="GO" id="GO:0005576">
    <property type="term" value="C:extracellular region"/>
    <property type="evidence" value="ECO:0007669"/>
    <property type="project" value="UniProtKB-SubCell"/>
</dbReference>
<dbReference type="GO" id="GO:0035792">
    <property type="term" value="C:host cell postsynaptic membrane"/>
    <property type="evidence" value="ECO:0007669"/>
    <property type="project" value="UniProtKB-KW"/>
</dbReference>
<dbReference type="GO" id="GO:0030550">
    <property type="term" value="F:acetylcholine receptor inhibitor activity"/>
    <property type="evidence" value="ECO:0007669"/>
    <property type="project" value="UniProtKB-KW"/>
</dbReference>
<dbReference type="GO" id="GO:0090729">
    <property type="term" value="F:toxin activity"/>
    <property type="evidence" value="ECO:0007669"/>
    <property type="project" value="UniProtKB-KW"/>
</dbReference>
<dbReference type="InterPro" id="IPR009958">
    <property type="entry name" value="Conotoxin_a-typ"/>
</dbReference>
<dbReference type="InterPro" id="IPR018072">
    <property type="entry name" value="Conotoxin_a-typ_CS"/>
</dbReference>
<dbReference type="Pfam" id="PF07365">
    <property type="entry name" value="Toxin_8"/>
    <property type="match status" value="1"/>
</dbReference>
<dbReference type="PROSITE" id="PS60014">
    <property type="entry name" value="ALPHA_CONOTOXIN"/>
    <property type="match status" value="1"/>
</dbReference>
<organism>
    <name type="scientific">Conus amadis</name>
    <name type="common">Amadis cone</name>
    <dbReference type="NCBI Taxonomy" id="198732"/>
    <lineage>
        <taxon>Eukaryota</taxon>
        <taxon>Metazoa</taxon>
        <taxon>Spiralia</taxon>
        <taxon>Lophotrochozoa</taxon>
        <taxon>Mollusca</taxon>
        <taxon>Gastropoda</taxon>
        <taxon>Caenogastropoda</taxon>
        <taxon>Neogastropoda</taxon>
        <taxon>Conoidea</taxon>
        <taxon>Conidae</taxon>
        <taxon>Conus</taxon>
        <taxon>Leptoconus</taxon>
    </lineage>
</organism>
<protein>
    <recommendedName>
        <fullName evidence="5">Alpha-conotoxine-like Am1.5</fullName>
    </recommendedName>
</protein>
<feature type="signal peptide" evidence="3">
    <location>
        <begin position="1"/>
        <end position="21"/>
    </location>
</feature>
<feature type="propeptide" id="PRO_0000453588" evidence="6">
    <location>
        <begin position="22"/>
        <end position="46"/>
    </location>
</feature>
<feature type="peptide" id="PRO_5018216776" description="Alpha-conotoxine-like Am1.5" evidence="4">
    <location>
        <begin position="47"/>
        <end position="64"/>
    </location>
</feature>
<feature type="region of interest" description="Ser-Xaa-Pro motif, crucial for potent interaction with nAChR" evidence="1">
    <location>
        <begin position="52"/>
        <end position="54"/>
    </location>
</feature>
<feature type="modified residue" description="4-carboxyglutamate" evidence="4">
    <location>
        <position position="49"/>
    </location>
</feature>
<feature type="modified residue" description="4-hydroxyproline" evidence="4">
    <location>
        <position position="54"/>
    </location>
</feature>
<feature type="modified residue" description="4-hydroxyproline" evidence="4">
    <location>
        <position position="61"/>
    </location>
</feature>
<feature type="modified residue" description="4-carboxyglutamate" evidence="4">
    <location>
        <position position="62"/>
    </location>
</feature>
<comment type="function">
    <text evidence="2">Alpha-conotoxins act on postsynaptic membranes, they bind to the nicotinic acetylcholine receptors (nAChR) and thus inhibit them.</text>
</comment>
<comment type="subcellular location">
    <subcellularLocation>
        <location evidence="4">Secreted</location>
    </subcellularLocation>
</comment>
<comment type="tissue specificity">
    <text evidence="6">Expressed by the venom duct.</text>
</comment>
<comment type="domain">
    <text evidence="5">The cysteine framework is I (CC-C-C). Alpha4/7 pattern.</text>
</comment>
<comment type="PTM">
    <text evidence="5">Contains 2 disulfide bonds.</text>
</comment>
<comment type="similarity">
    <text evidence="5">Belongs to the conotoxin A superfamily.</text>
</comment>
<evidence type="ECO:0000250" key="1">
    <source>
        <dbReference type="UniProtKB" id="P56636"/>
    </source>
</evidence>
<evidence type="ECO:0000250" key="2">
    <source>
        <dbReference type="UniProtKB" id="P69747"/>
    </source>
</evidence>
<evidence type="ECO:0000255" key="3"/>
<evidence type="ECO:0000269" key="4">
    <source>
    </source>
</evidence>
<evidence type="ECO:0000305" key="5"/>
<evidence type="ECO:0000305" key="6">
    <source>
    </source>
</evidence>
<accession>A0A3G3C7S0</accession>
<proteinExistence type="evidence at protein level"/>
<name>CA15_CONAA</name>
<reference key="1">
    <citation type="journal article" date="2019" name="J. Proteomics">
        <title>Cone snail prolyl-4-hydroxylase alpha-subunit sequences derived from transcriptomic data and mass spectrometric analysis of variable proline hydroxylation in C. amadis venom.</title>
        <authorList>
            <person name="Vijayasarathy M."/>
            <person name="Balaram P."/>
        </authorList>
    </citation>
    <scope>NUCLEOTIDE SEQUENCE [MRNA]</scope>
    <scope>PROTEIN SEQUENCE OF 47-64</scope>
    <scope>SUBCELLULAR LOCATION</scope>
    <scope>IDENTIFICATION BY MASS SPECTROMETRY</scope>
    <scope>HYDROXYLATION AT PRO-54 AND PRO-61</scope>
    <scope>GAMMA-CARBOXYGLUTAMATION AT GLU-49 AND GLU-62</scope>
    <source>
        <tissue>Venom</tissue>
        <tissue>Venom duct</tissue>
    </source>
</reference>
<keyword id="KW-0008">Acetylcholine receptor inhibiting toxin</keyword>
<keyword id="KW-0903">Direct protein sequencing</keyword>
<keyword id="KW-1015">Disulfide bond</keyword>
<keyword id="KW-0301">Gamma-carboxyglutamic acid</keyword>
<keyword id="KW-0379">Hydroxylation</keyword>
<keyword id="KW-0528">Neurotoxin</keyword>
<keyword id="KW-0629">Postsynaptic neurotoxin</keyword>
<keyword id="KW-0964">Secreted</keyword>
<keyword id="KW-0732">Signal</keyword>
<keyword id="KW-0800">Toxin</keyword>